<feature type="chain" id="PRO_0000064310" description="Solute carrier family 15 member 2">
    <location>
        <begin position="1"/>
        <end position="729"/>
    </location>
</feature>
<feature type="topological domain" description="Cytoplasmic" evidence="9">
    <location>
        <begin position="1"/>
        <end position="57"/>
    </location>
</feature>
<feature type="transmembrane region" description="Helical" evidence="4">
    <location>
        <begin position="58"/>
        <end position="78"/>
    </location>
</feature>
<feature type="topological domain" description="Extracellular" evidence="9">
    <location>
        <begin position="79"/>
        <end position="87"/>
    </location>
</feature>
<feature type="transmembrane region" description="Helical" evidence="4">
    <location>
        <begin position="88"/>
        <end position="108"/>
    </location>
</feature>
<feature type="topological domain" description="Cytoplasmic" evidence="9">
    <location>
        <begin position="109"/>
        <end position="113"/>
    </location>
</feature>
<feature type="transmembrane region" description="Helical" evidence="4">
    <location>
        <begin position="114"/>
        <end position="134"/>
    </location>
</feature>
<feature type="topological domain" description="Extracellular" evidence="9">
    <location>
        <begin position="135"/>
        <end position="139"/>
    </location>
</feature>
<feature type="transmembrane region" description="Helical" evidence="4">
    <location>
        <begin position="140"/>
        <end position="160"/>
    </location>
</feature>
<feature type="topological domain" description="Cytoplasmic" evidence="9">
    <location>
        <begin position="161"/>
        <end position="183"/>
    </location>
</feature>
<feature type="transmembrane region" description="Helical" evidence="4">
    <location>
        <begin position="184"/>
        <end position="204"/>
    </location>
</feature>
<feature type="topological domain" description="Extracellular" evidence="9">
    <location>
        <begin position="205"/>
        <end position="217"/>
    </location>
</feature>
<feature type="transmembrane region" description="Helical" evidence="4">
    <location>
        <begin position="218"/>
        <end position="238"/>
    </location>
</feature>
<feature type="topological domain" description="Cytoplasmic" evidence="9">
    <location>
        <begin position="239"/>
        <end position="295"/>
    </location>
</feature>
<feature type="transmembrane region" description="Helical" evidence="4">
    <location>
        <begin position="296"/>
        <end position="316"/>
    </location>
</feature>
<feature type="topological domain" description="Extracellular" evidence="9">
    <location>
        <begin position="317"/>
        <end position="343"/>
    </location>
</feature>
<feature type="transmembrane region" description="Helical" evidence="4">
    <location>
        <begin position="344"/>
        <end position="364"/>
    </location>
</feature>
<feature type="topological domain" description="Cytoplasmic" evidence="9">
    <location>
        <begin position="365"/>
        <end position="380"/>
    </location>
</feature>
<feature type="transmembrane region" description="Helical" evidence="4">
    <location>
        <begin position="381"/>
        <end position="401"/>
    </location>
</feature>
<feature type="topological domain" description="Extracellular" evidence="9">
    <location>
        <begin position="402"/>
        <end position="611"/>
    </location>
</feature>
<feature type="transmembrane region" description="Helical" evidence="4">
    <location>
        <begin position="612"/>
        <end position="632"/>
    </location>
</feature>
<feature type="topological domain" description="Cytoplasmic" evidence="9">
    <location>
        <begin position="633"/>
        <end position="643"/>
    </location>
</feature>
<feature type="transmembrane region" description="Helical" evidence="4">
    <location>
        <begin position="644"/>
        <end position="664"/>
    </location>
</feature>
<feature type="topological domain" description="Extracellular" evidence="9">
    <location>
        <begin position="665"/>
        <end position="674"/>
    </location>
</feature>
<feature type="transmembrane region" description="Helical" evidence="4">
    <location>
        <begin position="675"/>
        <end position="695"/>
    </location>
</feature>
<feature type="topological domain" description="Cytoplasmic" evidence="9">
    <location>
        <begin position="696"/>
        <end position="729"/>
    </location>
</feature>
<feature type="region of interest" description="Disordered" evidence="6">
    <location>
        <begin position="1"/>
        <end position="34"/>
    </location>
</feature>
<feature type="region of interest" description="Extracellular domain (ECD)" evidence="2">
    <location>
        <begin position="402"/>
        <end position="611"/>
    </location>
</feature>
<feature type="modified residue" description="Phosphoserine" evidence="3">
    <location>
        <position position="9"/>
    </location>
</feature>
<feature type="modified residue" description="Phosphothreonine" evidence="3">
    <location>
        <position position="12"/>
    </location>
</feature>
<feature type="modified residue" description="Phosphoserine" evidence="2">
    <location>
        <position position="28"/>
    </location>
</feature>
<feature type="glycosylation site" description="N-linked (GlcNAc...) asparagine" evidence="5">
    <location>
        <position position="435"/>
    </location>
</feature>
<feature type="glycosylation site" description="N-linked (GlcNAc...) asparagine" evidence="5">
    <location>
        <position position="472"/>
    </location>
</feature>
<feature type="glycosylation site" description="N-linked (GlcNAc...) asparagine" evidence="5">
    <location>
        <position position="508"/>
    </location>
</feature>
<feature type="glycosylation site" description="N-linked (GlcNAc...) asparagine" evidence="5">
    <location>
        <position position="528"/>
    </location>
</feature>
<feature type="glycosylation site" description="N-linked (GlcNAc...) asparagine" evidence="5">
    <location>
        <position position="587"/>
    </location>
</feature>
<dbReference type="EMBL" id="U32507">
    <property type="protein sequence ID" value="AAC48495.1"/>
    <property type="molecule type" value="mRNA"/>
</dbReference>
<dbReference type="RefSeq" id="NP_001076169.1">
    <property type="nucleotide sequence ID" value="NM_001082700.1"/>
</dbReference>
<dbReference type="SMR" id="P46029"/>
<dbReference type="FunCoup" id="P46029">
    <property type="interactions" value="92"/>
</dbReference>
<dbReference type="STRING" id="9986.ENSOCUP00000001594"/>
<dbReference type="GlyCosmos" id="P46029">
    <property type="glycosylation" value="5 sites, No reported glycans"/>
</dbReference>
<dbReference type="PaxDb" id="9986-ENSOCUP00000001594"/>
<dbReference type="GeneID" id="100009433"/>
<dbReference type="KEGG" id="ocu:100009433"/>
<dbReference type="CTD" id="6565"/>
<dbReference type="eggNOG" id="KOG1237">
    <property type="taxonomic scope" value="Eukaryota"/>
</dbReference>
<dbReference type="InParanoid" id="P46029"/>
<dbReference type="OrthoDB" id="205993at2759"/>
<dbReference type="Proteomes" id="UP000001811">
    <property type="component" value="Unplaced"/>
</dbReference>
<dbReference type="GO" id="GO:0016324">
    <property type="term" value="C:apical plasma membrane"/>
    <property type="evidence" value="ECO:0000250"/>
    <property type="project" value="UniProtKB"/>
</dbReference>
<dbReference type="GO" id="GO:0030670">
    <property type="term" value="C:phagocytic vesicle membrane"/>
    <property type="evidence" value="ECO:0007669"/>
    <property type="project" value="UniProtKB-SubCell"/>
</dbReference>
<dbReference type="GO" id="GO:0005886">
    <property type="term" value="C:plasma membrane"/>
    <property type="evidence" value="ECO:0000250"/>
    <property type="project" value="UniProtKB"/>
</dbReference>
<dbReference type="GO" id="GO:0071916">
    <property type="term" value="F:dipeptide transmembrane transporter activity"/>
    <property type="evidence" value="ECO:0000250"/>
    <property type="project" value="UniProtKB"/>
</dbReference>
<dbReference type="GO" id="GO:0015333">
    <property type="term" value="F:peptide:proton symporter activity"/>
    <property type="evidence" value="ECO:0000250"/>
    <property type="project" value="UniProtKB"/>
</dbReference>
<dbReference type="GO" id="GO:0042937">
    <property type="term" value="F:tripeptide transmembrane transporter activity"/>
    <property type="evidence" value="ECO:0000250"/>
    <property type="project" value="UniProtKB"/>
</dbReference>
<dbReference type="GO" id="GO:0140206">
    <property type="term" value="P:dipeptide import across plasma membrane"/>
    <property type="evidence" value="ECO:0000250"/>
    <property type="project" value="UniProtKB"/>
</dbReference>
<dbReference type="GO" id="GO:0045087">
    <property type="term" value="P:innate immune response"/>
    <property type="evidence" value="ECO:0007669"/>
    <property type="project" value="UniProtKB-KW"/>
</dbReference>
<dbReference type="GO" id="GO:0015835">
    <property type="term" value="P:peptidoglycan transport"/>
    <property type="evidence" value="ECO:0000250"/>
    <property type="project" value="UniProtKB"/>
</dbReference>
<dbReference type="GO" id="GO:0015031">
    <property type="term" value="P:protein transport"/>
    <property type="evidence" value="ECO:0007669"/>
    <property type="project" value="UniProtKB-KW"/>
</dbReference>
<dbReference type="GO" id="GO:0070424">
    <property type="term" value="P:regulation of nucleotide-binding domain, leucine rich repeat containing receptor signaling pathway"/>
    <property type="evidence" value="ECO:0000250"/>
    <property type="project" value="UniProtKB"/>
</dbReference>
<dbReference type="GO" id="GO:0140207">
    <property type="term" value="P:tripeptide import across plasma membrane"/>
    <property type="evidence" value="ECO:0000250"/>
    <property type="project" value="UniProtKB"/>
</dbReference>
<dbReference type="CDD" id="cd17347">
    <property type="entry name" value="MFS_SLC15A1_2_like"/>
    <property type="match status" value="1"/>
</dbReference>
<dbReference type="FunFam" id="1.20.1250.20:FF:000049">
    <property type="entry name" value="Solute carrier family 15 member 2"/>
    <property type="match status" value="1"/>
</dbReference>
<dbReference type="FunFam" id="1.20.1250.20:FF:000158">
    <property type="entry name" value="Solute carrier family 15 member 2"/>
    <property type="match status" value="1"/>
</dbReference>
<dbReference type="Gene3D" id="1.20.1250.20">
    <property type="entry name" value="MFS general substrate transporter like domains"/>
    <property type="match status" value="2"/>
</dbReference>
<dbReference type="InterPro" id="IPR029028">
    <property type="entry name" value="Alpha/beta_knot_MTases"/>
</dbReference>
<dbReference type="InterPro" id="IPR036259">
    <property type="entry name" value="MFS_trans_sf"/>
</dbReference>
<dbReference type="InterPro" id="IPR004768">
    <property type="entry name" value="Oligopep_transport"/>
</dbReference>
<dbReference type="InterPro" id="IPR000109">
    <property type="entry name" value="POT_fam"/>
</dbReference>
<dbReference type="InterPro" id="IPR018456">
    <property type="entry name" value="PTR2_symporter_CS"/>
</dbReference>
<dbReference type="NCBIfam" id="TIGR00926">
    <property type="entry name" value="2A1704"/>
    <property type="match status" value="1"/>
</dbReference>
<dbReference type="PANTHER" id="PTHR11654">
    <property type="entry name" value="OLIGOPEPTIDE TRANSPORTER-RELATED"/>
    <property type="match status" value="1"/>
</dbReference>
<dbReference type="Pfam" id="PF00854">
    <property type="entry name" value="PTR2"/>
    <property type="match status" value="2"/>
</dbReference>
<dbReference type="SUPFAM" id="SSF75217">
    <property type="entry name" value="alpha/beta knot"/>
    <property type="match status" value="1"/>
</dbReference>
<dbReference type="SUPFAM" id="SSF103473">
    <property type="entry name" value="MFS general substrate transporter"/>
    <property type="match status" value="1"/>
</dbReference>
<dbReference type="PROSITE" id="PS01022">
    <property type="entry name" value="PTR2_1"/>
    <property type="match status" value="1"/>
</dbReference>
<dbReference type="PROSITE" id="PS01023">
    <property type="entry name" value="PTR2_2"/>
    <property type="match status" value="1"/>
</dbReference>
<reference key="1">
    <citation type="journal article" date="1996" name="Proc. Natl. Acad. Sci. U.S.A.">
        <title>Expression cloning and functional characterization of the kidney cortex high-affinity proton-coupled peptide transporter.</title>
        <authorList>
            <person name="Boll M."/>
            <person name="Herget M."/>
            <person name="Wagener M."/>
            <person name="Weber W."/>
            <person name="Markovich D."/>
            <person name="Biber J."/>
            <person name="Clauss W."/>
            <person name="Murer H."/>
            <person name="Daniel H."/>
        </authorList>
    </citation>
    <scope>NUCLEOTIDE SEQUENCE [MRNA]</scope>
    <scope>FUNCTION</scope>
    <scope>TRANSPORTER ACTIVITY</scope>
    <scope>BIOPHYSICOCHEMICAL PROPERTIES</scope>
    <scope>SUBCELLULAR LOCATION</scope>
    <scope>TISSUE SPECIFICITY</scope>
    <source>
        <tissue>Kidney</tissue>
    </source>
</reference>
<name>S15A2_RABIT</name>
<proteinExistence type="evidence at protein level"/>
<organism>
    <name type="scientific">Oryctolagus cuniculus</name>
    <name type="common">Rabbit</name>
    <dbReference type="NCBI Taxonomy" id="9986"/>
    <lineage>
        <taxon>Eukaryota</taxon>
        <taxon>Metazoa</taxon>
        <taxon>Chordata</taxon>
        <taxon>Craniata</taxon>
        <taxon>Vertebrata</taxon>
        <taxon>Euteleostomi</taxon>
        <taxon>Mammalia</taxon>
        <taxon>Eutheria</taxon>
        <taxon>Euarchontoglires</taxon>
        <taxon>Glires</taxon>
        <taxon>Lagomorpha</taxon>
        <taxon>Leporidae</taxon>
        <taxon>Oryctolagus</taxon>
    </lineage>
</organism>
<keyword id="KW-1003">Cell membrane</keyword>
<keyword id="KW-0968">Cytoplasmic vesicle</keyword>
<keyword id="KW-0325">Glycoprotein</keyword>
<keyword id="KW-0391">Immunity</keyword>
<keyword id="KW-0399">Innate immunity</keyword>
<keyword id="KW-0472">Membrane</keyword>
<keyword id="KW-0571">Peptide transport</keyword>
<keyword id="KW-0597">Phosphoprotein</keyword>
<keyword id="KW-0653">Protein transport</keyword>
<keyword id="KW-1185">Reference proteome</keyword>
<keyword id="KW-0769">Symport</keyword>
<keyword id="KW-0812">Transmembrane</keyword>
<keyword id="KW-1133">Transmembrane helix</keyword>
<keyword id="KW-0813">Transport</keyword>
<protein>
    <recommendedName>
        <fullName evidence="9">Solute carrier family 15 member 2</fullName>
    </recommendedName>
    <alternativeName>
        <fullName evidence="8">Kidney H(+)/peptide cotransporter</fullName>
    </alternativeName>
    <alternativeName>
        <fullName evidence="8">Oligopeptide transporter, kidney isoform</fullName>
    </alternativeName>
    <alternativeName>
        <fullName evidence="8">Peptide transporter 2</fullName>
    </alternativeName>
</protein>
<gene>
    <name evidence="1" type="primary">SLC15A2</name>
    <name evidence="8" type="synonym">PEPT2</name>
</gene>
<comment type="function">
    <text evidence="1 2 3 7">Proton-coupled amino-acid transporter that transports oligopeptides of 2 to 4 amino acids with a preference for dipeptides (PubMed:8552623). Transports neutral and anionic dipeptides with a proton to peptide stoichiometry of 2:1 or 3:1 (By similarity). In kidney, involved in the absorption of circulating di- and tripeptides from the glomerular filtrate. Can also transport beta-lactam antibiotics, such as the aminocephalosporin cefadroxil, and other antiviral and anticancer drugs (PubMed:8552623). Transports the dipeptide-like aminopeptidase inhibitor bestatin (By similarity). Also able to transport carnosine (By similarity). Involved in innate immunity by promoting the detection of microbial pathogens by NOD-like receptors (NLRs) (By similarity). Mediates transport of bacterial peptidoglycans across the plasma membrane or, in macrophages, the phagosome membrane: catalyzes the transport of certain bacterial peptidoglycans, such as muramyl dipeptide (MDP), the NOD2 ligand (By similarity).</text>
</comment>
<comment type="catalytic activity">
    <reaction evidence="7">
        <text>a dipeptide(out) + 2 H(+)(out) = a dipeptide(in) + 2 H(+)(in)</text>
        <dbReference type="Rhea" id="RHEA:76179"/>
        <dbReference type="ChEBI" id="CHEBI:15378"/>
        <dbReference type="ChEBI" id="CHEBI:90799"/>
    </reaction>
    <physiologicalReaction direction="left-to-right" evidence="7">
        <dbReference type="Rhea" id="RHEA:76180"/>
    </physiologicalReaction>
</comment>
<comment type="catalytic activity">
    <reaction evidence="1">
        <text>N-acetyl-D-muramoyl-L-alanyl-D-isoglutamine(out) + 3 H(+)(out) = N-acetyl-D-muramoyl-L-alanyl-D-isoglutamine(in) + 3 H(+)(in)</text>
        <dbReference type="Rhea" id="RHEA:76375"/>
        <dbReference type="ChEBI" id="CHEBI:15378"/>
        <dbReference type="ChEBI" id="CHEBI:155830"/>
    </reaction>
    <physiologicalReaction direction="left-to-right" evidence="1">
        <dbReference type="Rhea" id="RHEA:76376"/>
    </physiologicalReaction>
</comment>
<comment type="catalytic activity">
    <reaction evidence="2">
        <text>glycyl-L-leucine(out) + 2 H(+)(out) = glycyl-L-leucine(in) + 2 H(+)(in)</text>
        <dbReference type="Rhea" id="RHEA:76167"/>
        <dbReference type="ChEBI" id="CHEBI:15378"/>
        <dbReference type="ChEBI" id="CHEBI:143163"/>
    </reaction>
    <physiologicalReaction direction="left-to-right" evidence="2">
        <dbReference type="Rhea" id="RHEA:76168"/>
    </physiologicalReaction>
</comment>
<comment type="catalytic activity">
    <reaction evidence="2">
        <text>glycyl-L-lysine(out) + 2 H(+)(out) = glycyl-L-lysine(in) + 2 H(+)(in)</text>
        <dbReference type="Rhea" id="RHEA:76171"/>
        <dbReference type="ChEBI" id="CHEBI:15378"/>
        <dbReference type="ChEBI" id="CHEBI:194323"/>
    </reaction>
    <physiologicalReaction direction="left-to-right" evidence="2">
        <dbReference type="Rhea" id="RHEA:76172"/>
    </physiologicalReaction>
</comment>
<comment type="catalytic activity">
    <reaction evidence="2">
        <text>glycyl-L-glutamate(out) + 3 H(+)(out) = glycyl-L-glutamate(in) + 3 H(+)(in)</text>
        <dbReference type="Rhea" id="RHEA:76175"/>
        <dbReference type="ChEBI" id="CHEBI:15378"/>
        <dbReference type="ChEBI" id="CHEBI:73784"/>
    </reaction>
    <physiologicalReaction direction="left-to-right" evidence="2">
        <dbReference type="Rhea" id="RHEA:76176"/>
    </physiologicalReaction>
</comment>
<comment type="catalytic activity">
    <reaction evidence="2">
        <text>L-alanyl-L-alanine(out) + 2 H(+)(out) = L-alanyl-L-alanine(in) + 2 H(+)(in)</text>
        <dbReference type="Rhea" id="RHEA:76183"/>
        <dbReference type="ChEBI" id="CHEBI:15378"/>
        <dbReference type="ChEBI" id="CHEBI:195181"/>
    </reaction>
    <physiologicalReaction direction="left-to-right" evidence="2">
        <dbReference type="Rhea" id="RHEA:76184"/>
    </physiologicalReaction>
</comment>
<comment type="catalytic activity">
    <reaction evidence="2">
        <text>an L-amino acid tripeptide(out) + 2 H(+)(out) = an L-amino acid tripeptide(in) + 2 H(+)(in)</text>
        <dbReference type="Rhea" id="RHEA:76187"/>
        <dbReference type="ChEBI" id="CHEBI:15378"/>
        <dbReference type="ChEBI" id="CHEBI:155837"/>
    </reaction>
    <physiologicalReaction direction="left-to-right" evidence="2">
        <dbReference type="Rhea" id="RHEA:76188"/>
    </physiologicalReaction>
</comment>
<comment type="catalytic activity">
    <reaction evidence="1">
        <text>carnosine(out) + 2 H(+)(out) = carnosine(in) + 2 H(+)(in)</text>
        <dbReference type="Rhea" id="RHEA:76191"/>
        <dbReference type="ChEBI" id="CHEBI:15378"/>
        <dbReference type="ChEBI" id="CHEBI:57485"/>
    </reaction>
    <physiologicalReaction direction="left-to-right" evidence="1">
        <dbReference type="Rhea" id="RHEA:76192"/>
    </physiologicalReaction>
</comment>
<comment type="biophysicochemical properties">
    <kinetics>
        <KM evidence="7">25.8 uM for cefadroxil (at pH 6.0)</KM>
        <KM evidence="7">23.8 uM for cefadroxil (at pH 6.5)</KM>
        <KM evidence="7">32.5 uM for cefadroxil (at pH 7.4)</KM>
        <KM evidence="7">40.9 uM for cefadroxil (at pH 8.0)</KM>
    </kinetics>
    <phDependence>
        <text evidence="7">Optimum pH is 6.0 or lower.</text>
    </phDependence>
</comment>
<comment type="subunit">
    <text evidence="2">Interacts (via extracellular domain region) with trypsin.</text>
</comment>
<comment type="subcellular location">
    <subcellularLocation>
        <location evidence="2">Apical cell membrane</location>
        <topology evidence="4">Multi-pass membrane protein</topology>
    </subcellularLocation>
    <subcellularLocation>
        <location evidence="1">Cytoplasmic vesicle</location>
        <location evidence="1">Phagosome membrane</location>
        <topology evidence="4">Multi-pass membrane protein</topology>
    </subcellularLocation>
    <subcellularLocation>
        <location evidence="10">Cell membrane</location>
        <topology evidence="4">Multi-pass membrane protein</topology>
    </subcellularLocation>
    <text evidence="1">Associated with the cell membrane in resting macrophages and enriched in phagocytic cups and phagosomes after particle internalization.</text>
</comment>
<comment type="tissue specificity">
    <text evidence="7">Strongly expressed in kidney. Also detected in brain, lung, liver and heart.</text>
</comment>
<comment type="domain">
    <text evidence="2">The extracellular domain (ECD) region specifically binds trypsin.</text>
</comment>
<comment type="similarity">
    <text evidence="9">Belongs to the major facilitator superfamily. Proton-dependent oligopeptide transporter (POT/PTR) (TC 2.A.17) family.</text>
</comment>
<sequence length="729" mass="81664">MNPFQQNESKETLFSPVSTEETPPRLSSPAKKTPPKICGSNYPLSIAFIVVNEFCERFSYYGMKAVLTLYFLYFLHWNEDTSTSVYHAFSSLCYFTPILGAAIADSWLGKFKTIIYLSLVNVLGHVIKSLSAFPILGGKVVHTVLSLVGLCLIALGTGGIKPCVAAFGGDQFEEKHAEERTRYFSGFYLAINAGSLISTFITPMLRGDVQCFGEDCYALAFGVPGLLMVIALVVFAMGSKMYKKPPPEGNIVAQVVKCIWFAISNRFKNRSEDIPKRQHWLDWAAEKYPKQLIMDVKTLTRVLFLYIPLPMFWALLDQQGSRWTLQATKMNGNLGFFVLQPDQMQVLNPLLVLIFIPLFDLVIYRLISKCGINFTSLRKMAVGMVLACLAFAAAATVEIKINEMAPPQPGSQEILLQVLNLADDEVKLTVLGNNNNSLLADSIKSFQKTPHYSKIHLNTKSQDFYFHLKYHNLSIYTEHSVEERNWYSLIIREDGKSISSIMVKDMENETTYGMTAIRFINTLQENVNISLGTDISLNVGENYGVSAYRTVQRGEYPAVHCKTEDKDFSLNLGLLDFGASYLFVITNSTKQGLQAWKMEDIPANKVSIAWQLPQYALVTAGEVMFSVTGLEFSYSQAPSSMKSVLQAAWLLTVAIGNIIVLVVAQFSGLVQWAEFVLFSCLLLVVCLIFSIMGYYYIPIKSEDIQGPEDKQIPHMQGNMINLETKKTKL</sequence>
<accession>P46029</accession>
<evidence type="ECO:0000250" key="1">
    <source>
        <dbReference type="UniProtKB" id="Q16348"/>
    </source>
</evidence>
<evidence type="ECO:0000250" key="2">
    <source>
        <dbReference type="UniProtKB" id="Q63424"/>
    </source>
</evidence>
<evidence type="ECO:0000250" key="3">
    <source>
        <dbReference type="UniProtKB" id="Q9ES07"/>
    </source>
</evidence>
<evidence type="ECO:0000255" key="4"/>
<evidence type="ECO:0000255" key="5">
    <source>
        <dbReference type="PROSITE-ProRule" id="PRU00498"/>
    </source>
</evidence>
<evidence type="ECO:0000256" key="6">
    <source>
        <dbReference type="SAM" id="MobiDB-lite"/>
    </source>
</evidence>
<evidence type="ECO:0000269" key="7">
    <source>
    </source>
</evidence>
<evidence type="ECO:0000303" key="8">
    <source>
    </source>
</evidence>
<evidence type="ECO:0000305" key="9"/>
<evidence type="ECO:0000305" key="10">
    <source>
    </source>
</evidence>